<organism>
    <name type="scientific">Paracoccus denitrificans (strain Pd 1222)</name>
    <dbReference type="NCBI Taxonomy" id="318586"/>
    <lineage>
        <taxon>Bacteria</taxon>
        <taxon>Pseudomonadati</taxon>
        <taxon>Pseudomonadota</taxon>
        <taxon>Alphaproteobacteria</taxon>
        <taxon>Rhodobacterales</taxon>
        <taxon>Paracoccaceae</taxon>
        <taxon>Paracoccus</taxon>
    </lineage>
</organism>
<protein>
    <recommendedName>
        <fullName evidence="1">N-(5'-phosphoribosyl)anthranilate isomerase</fullName>
        <shortName evidence="1">PRAI</shortName>
        <ecNumber evidence="1">5.3.1.24</ecNumber>
    </recommendedName>
</protein>
<accession>A1B8L1</accession>
<proteinExistence type="inferred from homology"/>
<keyword id="KW-0028">Amino-acid biosynthesis</keyword>
<keyword id="KW-0057">Aromatic amino acid biosynthesis</keyword>
<keyword id="KW-0413">Isomerase</keyword>
<keyword id="KW-1185">Reference proteome</keyword>
<keyword id="KW-0822">Tryptophan biosynthesis</keyword>
<sequence>MAVSVKICGLTEAAGLAAAVDAGARYVGFVFFPKSPRHVTPGTAAELAAQVPLGVAKVGLFVNPDDAALDAVLAHVPLDVIQLHGAETPARVAEVKARTGLPVMKAVGVADPQDLDALWDYGLVADMLLIDAKPPKDAVLPGGNGLAFDWRLLAGRQILKPWLLAGGLTPENVHEAIRLTRAPGVDVSSGVESAPGVKDPDRIRSFIARATAPIL</sequence>
<reference key="1">
    <citation type="submission" date="2006-12" db="EMBL/GenBank/DDBJ databases">
        <title>Complete sequence of chromosome 2 of Paracoccus denitrificans PD1222.</title>
        <authorList>
            <person name="Copeland A."/>
            <person name="Lucas S."/>
            <person name="Lapidus A."/>
            <person name="Barry K."/>
            <person name="Detter J.C."/>
            <person name="Glavina del Rio T."/>
            <person name="Hammon N."/>
            <person name="Israni S."/>
            <person name="Dalin E."/>
            <person name="Tice H."/>
            <person name="Pitluck S."/>
            <person name="Munk A.C."/>
            <person name="Brettin T."/>
            <person name="Bruce D."/>
            <person name="Han C."/>
            <person name="Tapia R."/>
            <person name="Gilna P."/>
            <person name="Schmutz J."/>
            <person name="Larimer F."/>
            <person name="Land M."/>
            <person name="Hauser L."/>
            <person name="Kyrpides N."/>
            <person name="Lykidis A."/>
            <person name="Spiro S."/>
            <person name="Richardson D.J."/>
            <person name="Moir J.W.B."/>
            <person name="Ferguson S.J."/>
            <person name="van Spanning R.J.M."/>
            <person name="Richardson P."/>
        </authorList>
    </citation>
    <scope>NUCLEOTIDE SEQUENCE [LARGE SCALE GENOMIC DNA]</scope>
    <source>
        <strain>Pd 1222</strain>
    </source>
</reference>
<feature type="chain" id="PRO_1000018617" description="N-(5'-phosphoribosyl)anthranilate isomerase">
    <location>
        <begin position="1"/>
        <end position="215"/>
    </location>
</feature>
<dbReference type="EC" id="5.3.1.24" evidence="1"/>
<dbReference type="EMBL" id="CP000490">
    <property type="protein sequence ID" value="ABL71855.1"/>
    <property type="molecule type" value="Genomic_DNA"/>
</dbReference>
<dbReference type="RefSeq" id="WP_011750024.1">
    <property type="nucleotide sequence ID" value="NC_008687.1"/>
</dbReference>
<dbReference type="SMR" id="A1B8L1"/>
<dbReference type="STRING" id="318586.Pden_3789"/>
<dbReference type="EnsemblBacteria" id="ABL71855">
    <property type="protein sequence ID" value="ABL71855"/>
    <property type="gene ID" value="Pden_3789"/>
</dbReference>
<dbReference type="GeneID" id="93453451"/>
<dbReference type="KEGG" id="pde:Pden_3789"/>
<dbReference type="eggNOG" id="COG0135">
    <property type="taxonomic scope" value="Bacteria"/>
</dbReference>
<dbReference type="HOGENOM" id="CLU_076364_1_1_5"/>
<dbReference type="OrthoDB" id="9796196at2"/>
<dbReference type="UniPathway" id="UPA00035">
    <property type="reaction ID" value="UER00042"/>
</dbReference>
<dbReference type="Proteomes" id="UP000000361">
    <property type="component" value="Chromosome 2"/>
</dbReference>
<dbReference type="GO" id="GO:0004640">
    <property type="term" value="F:phosphoribosylanthranilate isomerase activity"/>
    <property type="evidence" value="ECO:0007669"/>
    <property type="project" value="UniProtKB-UniRule"/>
</dbReference>
<dbReference type="GO" id="GO:0000162">
    <property type="term" value="P:L-tryptophan biosynthetic process"/>
    <property type="evidence" value="ECO:0007669"/>
    <property type="project" value="UniProtKB-UniRule"/>
</dbReference>
<dbReference type="CDD" id="cd00405">
    <property type="entry name" value="PRAI"/>
    <property type="match status" value="1"/>
</dbReference>
<dbReference type="Gene3D" id="3.20.20.70">
    <property type="entry name" value="Aldolase class I"/>
    <property type="match status" value="1"/>
</dbReference>
<dbReference type="HAMAP" id="MF_00135">
    <property type="entry name" value="PRAI"/>
    <property type="match status" value="1"/>
</dbReference>
<dbReference type="InterPro" id="IPR013785">
    <property type="entry name" value="Aldolase_TIM"/>
</dbReference>
<dbReference type="InterPro" id="IPR001240">
    <property type="entry name" value="PRAI_dom"/>
</dbReference>
<dbReference type="InterPro" id="IPR011060">
    <property type="entry name" value="RibuloseP-bd_barrel"/>
</dbReference>
<dbReference type="InterPro" id="IPR044643">
    <property type="entry name" value="TrpF_fam"/>
</dbReference>
<dbReference type="NCBIfam" id="NF002295">
    <property type="entry name" value="PRK01222.1-1"/>
    <property type="match status" value="1"/>
</dbReference>
<dbReference type="PANTHER" id="PTHR42894">
    <property type="entry name" value="N-(5'-PHOSPHORIBOSYL)ANTHRANILATE ISOMERASE"/>
    <property type="match status" value="1"/>
</dbReference>
<dbReference type="PANTHER" id="PTHR42894:SF1">
    <property type="entry name" value="N-(5'-PHOSPHORIBOSYL)ANTHRANILATE ISOMERASE"/>
    <property type="match status" value="1"/>
</dbReference>
<dbReference type="Pfam" id="PF00697">
    <property type="entry name" value="PRAI"/>
    <property type="match status" value="1"/>
</dbReference>
<dbReference type="SUPFAM" id="SSF51366">
    <property type="entry name" value="Ribulose-phoshate binding barrel"/>
    <property type="match status" value="1"/>
</dbReference>
<evidence type="ECO:0000255" key="1">
    <source>
        <dbReference type="HAMAP-Rule" id="MF_00135"/>
    </source>
</evidence>
<name>TRPF_PARDP</name>
<comment type="catalytic activity">
    <reaction evidence="1">
        <text>N-(5-phospho-beta-D-ribosyl)anthranilate = 1-(2-carboxyphenylamino)-1-deoxy-D-ribulose 5-phosphate</text>
        <dbReference type="Rhea" id="RHEA:21540"/>
        <dbReference type="ChEBI" id="CHEBI:18277"/>
        <dbReference type="ChEBI" id="CHEBI:58613"/>
        <dbReference type="EC" id="5.3.1.24"/>
    </reaction>
</comment>
<comment type="pathway">
    <text evidence="1">Amino-acid biosynthesis; L-tryptophan biosynthesis; L-tryptophan from chorismate: step 3/5.</text>
</comment>
<comment type="similarity">
    <text evidence="1">Belongs to the TrpF family.</text>
</comment>
<gene>
    <name evidence="1" type="primary">trpF</name>
    <name type="ordered locus">Pden_3789</name>
</gene>